<accession>C1DUY4</accession>
<evidence type="ECO:0000255" key="1">
    <source>
        <dbReference type="HAMAP-Rule" id="MF_00375"/>
    </source>
</evidence>
<name>GSA_SULAA</name>
<reference key="1">
    <citation type="journal article" date="2009" name="J. Bacteriol.">
        <title>Complete and draft genome sequences of six members of the Aquificales.</title>
        <authorList>
            <person name="Reysenbach A.-L."/>
            <person name="Hamamura N."/>
            <person name="Podar M."/>
            <person name="Griffiths E."/>
            <person name="Ferreira S."/>
            <person name="Hochstein R."/>
            <person name="Heidelberg J."/>
            <person name="Johnson J."/>
            <person name="Mead D."/>
            <person name="Pohorille A."/>
            <person name="Sarmiento M."/>
            <person name="Schweighofer K."/>
            <person name="Seshadri R."/>
            <person name="Voytek M.A."/>
        </authorList>
    </citation>
    <scope>NUCLEOTIDE SEQUENCE [LARGE SCALE GENOMIC DNA]</scope>
    <source>
        <strain>DSM 15241 / OCM 825 / Az-Fu1</strain>
    </source>
</reference>
<proteinExistence type="inferred from homology"/>
<keyword id="KW-0963">Cytoplasm</keyword>
<keyword id="KW-0413">Isomerase</keyword>
<keyword id="KW-0627">Porphyrin biosynthesis</keyword>
<keyword id="KW-0663">Pyridoxal phosphate</keyword>
<keyword id="KW-1185">Reference proteome</keyword>
<dbReference type="EC" id="5.4.3.8" evidence="1"/>
<dbReference type="EMBL" id="CP001229">
    <property type="protein sequence ID" value="ACN98435.1"/>
    <property type="molecule type" value="Genomic_DNA"/>
</dbReference>
<dbReference type="RefSeq" id="WP_012673760.1">
    <property type="nucleotide sequence ID" value="NC_012438.1"/>
</dbReference>
<dbReference type="SMR" id="C1DUY4"/>
<dbReference type="STRING" id="204536.SULAZ_0948"/>
<dbReference type="KEGG" id="saf:SULAZ_0948"/>
<dbReference type="eggNOG" id="COG0001">
    <property type="taxonomic scope" value="Bacteria"/>
</dbReference>
<dbReference type="HOGENOM" id="CLU_016922_1_5_0"/>
<dbReference type="OrthoDB" id="9807885at2"/>
<dbReference type="UniPathway" id="UPA00251">
    <property type="reaction ID" value="UER00317"/>
</dbReference>
<dbReference type="Proteomes" id="UP000001369">
    <property type="component" value="Chromosome"/>
</dbReference>
<dbReference type="GO" id="GO:0005737">
    <property type="term" value="C:cytoplasm"/>
    <property type="evidence" value="ECO:0007669"/>
    <property type="project" value="UniProtKB-SubCell"/>
</dbReference>
<dbReference type="GO" id="GO:0042286">
    <property type="term" value="F:glutamate-1-semialdehyde 2,1-aminomutase activity"/>
    <property type="evidence" value="ECO:0007669"/>
    <property type="project" value="UniProtKB-UniRule"/>
</dbReference>
<dbReference type="GO" id="GO:0030170">
    <property type="term" value="F:pyridoxal phosphate binding"/>
    <property type="evidence" value="ECO:0007669"/>
    <property type="project" value="InterPro"/>
</dbReference>
<dbReference type="GO" id="GO:0008483">
    <property type="term" value="F:transaminase activity"/>
    <property type="evidence" value="ECO:0007669"/>
    <property type="project" value="InterPro"/>
</dbReference>
<dbReference type="GO" id="GO:0006782">
    <property type="term" value="P:protoporphyrinogen IX biosynthetic process"/>
    <property type="evidence" value="ECO:0007669"/>
    <property type="project" value="UniProtKB-UniRule"/>
</dbReference>
<dbReference type="CDD" id="cd00610">
    <property type="entry name" value="OAT_like"/>
    <property type="match status" value="1"/>
</dbReference>
<dbReference type="FunFam" id="3.40.640.10:FF:000021">
    <property type="entry name" value="Glutamate-1-semialdehyde 2,1-aminomutase"/>
    <property type="match status" value="1"/>
</dbReference>
<dbReference type="Gene3D" id="3.90.1150.10">
    <property type="entry name" value="Aspartate Aminotransferase, domain 1"/>
    <property type="match status" value="1"/>
</dbReference>
<dbReference type="Gene3D" id="3.40.640.10">
    <property type="entry name" value="Type I PLP-dependent aspartate aminotransferase-like (Major domain)"/>
    <property type="match status" value="1"/>
</dbReference>
<dbReference type="HAMAP" id="MF_00375">
    <property type="entry name" value="HemL_aminotrans_3"/>
    <property type="match status" value="1"/>
</dbReference>
<dbReference type="InterPro" id="IPR004639">
    <property type="entry name" value="4pyrrol_synth_GluAld_NH2Trfase"/>
</dbReference>
<dbReference type="InterPro" id="IPR005814">
    <property type="entry name" value="Aminotrans_3"/>
</dbReference>
<dbReference type="InterPro" id="IPR049704">
    <property type="entry name" value="Aminotrans_3_PPA_site"/>
</dbReference>
<dbReference type="InterPro" id="IPR015424">
    <property type="entry name" value="PyrdxlP-dep_Trfase"/>
</dbReference>
<dbReference type="InterPro" id="IPR015421">
    <property type="entry name" value="PyrdxlP-dep_Trfase_major"/>
</dbReference>
<dbReference type="InterPro" id="IPR015422">
    <property type="entry name" value="PyrdxlP-dep_Trfase_small"/>
</dbReference>
<dbReference type="NCBIfam" id="TIGR00713">
    <property type="entry name" value="hemL"/>
    <property type="match status" value="1"/>
</dbReference>
<dbReference type="NCBIfam" id="NF000818">
    <property type="entry name" value="PRK00062.1"/>
    <property type="match status" value="1"/>
</dbReference>
<dbReference type="PANTHER" id="PTHR43713">
    <property type="entry name" value="GLUTAMATE-1-SEMIALDEHYDE 2,1-AMINOMUTASE"/>
    <property type="match status" value="1"/>
</dbReference>
<dbReference type="PANTHER" id="PTHR43713:SF3">
    <property type="entry name" value="GLUTAMATE-1-SEMIALDEHYDE 2,1-AMINOMUTASE 1, CHLOROPLASTIC-RELATED"/>
    <property type="match status" value="1"/>
</dbReference>
<dbReference type="Pfam" id="PF00202">
    <property type="entry name" value="Aminotran_3"/>
    <property type="match status" value="1"/>
</dbReference>
<dbReference type="SUPFAM" id="SSF53383">
    <property type="entry name" value="PLP-dependent transferases"/>
    <property type="match status" value="1"/>
</dbReference>
<dbReference type="PROSITE" id="PS00600">
    <property type="entry name" value="AA_TRANSFER_CLASS_3"/>
    <property type="match status" value="1"/>
</dbReference>
<comment type="catalytic activity">
    <reaction evidence="1">
        <text>(S)-4-amino-5-oxopentanoate = 5-aminolevulinate</text>
        <dbReference type="Rhea" id="RHEA:14265"/>
        <dbReference type="ChEBI" id="CHEBI:57501"/>
        <dbReference type="ChEBI" id="CHEBI:356416"/>
        <dbReference type="EC" id="5.4.3.8"/>
    </reaction>
</comment>
<comment type="cofactor">
    <cofactor evidence="1">
        <name>pyridoxal 5'-phosphate</name>
        <dbReference type="ChEBI" id="CHEBI:597326"/>
    </cofactor>
</comment>
<comment type="pathway">
    <text evidence="1">Porphyrin-containing compound metabolism; protoporphyrin-IX biosynthesis; 5-aminolevulinate from L-glutamyl-tRNA(Glu): step 2/2.</text>
</comment>
<comment type="subunit">
    <text evidence="1">Homodimer.</text>
</comment>
<comment type="subcellular location">
    <subcellularLocation>
        <location evidence="1">Cytoplasm</location>
    </subcellularLocation>
</comment>
<comment type="similarity">
    <text evidence="1">Belongs to the class-III pyridoxal-phosphate-dependent aminotransferase family. HemL subfamily.</text>
</comment>
<gene>
    <name evidence="1" type="primary">hemL</name>
    <name type="ordered locus">SULAZ_0948</name>
</gene>
<sequence length="427" mass="46798">MNILKSKELFKEAQNYLVGGVNSPVRAFKAVGTDPIFIQRGKGSRIWDVDGNEYIDYVLSWGPLILGHAHDQVVNAIKQVANYGTSFGAPTELEIEMAKAVVDAVKSVEMVRFVNSGTEATMSAIRLARGYTKRKKIVKFDGCYHGHGDSLLVSAGSGVATLGIPGTPGIPEELANLTIVLPYNDIEAVEEAFKRYGEDIACVIIEPVAGNMGVVAPSKEYHQRLRDITRKYGALLIFDEVMTGFRLAYGGAQELYGIDPDLTTFGKVIGGGLPVGAYGGKREIMEYVAPVGPVYQAGTLSGNPLAMAAGLRQLQLLKELNPYRELDEKGRFLEEGFKQIAQEFSAAIQVNRVGSMITVFFTDIPVKDFATAKTSDTNKFAKFFRCMLEKGIYLPASQFEAFFLSTAHSQKDLEETLEKARECFKIL</sequence>
<feature type="chain" id="PRO_0000382384" description="Glutamate-1-semialdehyde 2,1-aminomutase">
    <location>
        <begin position="1"/>
        <end position="427"/>
    </location>
</feature>
<feature type="modified residue" description="N6-(pyridoxal phosphate)lysine" evidence="1">
    <location>
        <position position="267"/>
    </location>
</feature>
<organism>
    <name type="scientific">Sulfurihydrogenibium azorense (strain DSM 15241 / OCM 825 / Az-Fu1)</name>
    <dbReference type="NCBI Taxonomy" id="204536"/>
    <lineage>
        <taxon>Bacteria</taxon>
        <taxon>Pseudomonadati</taxon>
        <taxon>Aquificota</taxon>
        <taxon>Aquificia</taxon>
        <taxon>Aquificales</taxon>
        <taxon>Hydrogenothermaceae</taxon>
        <taxon>Sulfurihydrogenibium</taxon>
    </lineage>
</organism>
<protein>
    <recommendedName>
        <fullName evidence="1">Glutamate-1-semialdehyde 2,1-aminomutase</fullName>
        <shortName evidence="1">GSA</shortName>
        <ecNumber evidence="1">5.4.3.8</ecNumber>
    </recommendedName>
    <alternativeName>
        <fullName evidence="1">Glutamate-1-semialdehyde aminotransferase</fullName>
        <shortName evidence="1">GSA-AT</shortName>
    </alternativeName>
</protein>